<organism>
    <name type="scientific">Aspergillus fumigatus (strain ATCC MYA-4609 / CBS 101355 / FGSC A1100 / Af293)</name>
    <name type="common">Neosartorya fumigata</name>
    <dbReference type="NCBI Taxonomy" id="330879"/>
    <lineage>
        <taxon>Eukaryota</taxon>
        <taxon>Fungi</taxon>
        <taxon>Dikarya</taxon>
        <taxon>Ascomycota</taxon>
        <taxon>Pezizomycotina</taxon>
        <taxon>Eurotiomycetes</taxon>
        <taxon>Eurotiomycetidae</taxon>
        <taxon>Eurotiales</taxon>
        <taxon>Aspergillaceae</taxon>
        <taxon>Aspergillus</taxon>
        <taxon>Aspergillus subgen. Fumigati</taxon>
    </lineage>
</organism>
<reference key="1">
    <citation type="journal article" date="2004" name="Fungal Genet. Biol.">
        <title>Insight into the genome of Aspergillus fumigatus: analysis of a 922 kb region encompassing the nitrate assimilation gene cluster.</title>
        <authorList>
            <person name="Pain A."/>
            <person name="Woodward J.R."/>
            <person name="Quail M.A."/>
            <person name="Anderson M.J."/>
            <person name="Clark R."/>
            <person name="Collins M."/>
            <person name="Fosker N."/>
            <person name="Fraser A."/>
            <person name="Harris D.E."/>
            <person name="Larke N."/>
            <person name="Murphy L.D."/>
            <person name="Humphray S."/>
            <person name="O'Neil S."/>
            <person name="Pertea M."/>
            <person name="Price C."/>
            <person name="Rabbinowitsch E."/>
            <person name="Rajandream M.A."/>
            <person name="Salzberg S.L."/>
            <person name="Saunders D."/>
            <person name="Seeger K."/>
            <person name="Sharp S."/>
            <person name="Warren T."/>
            <person name="Denning D.W."/>
            <person name="Barrell B.G."/>
            <person name="Hall N."/>
        </authorList>
    </citation>
    <scope>NUCLEOTIDE SEQUENCE [LARGE SCALE GENOMIC DNA]</scope>
    <source>
        <strain>ATCC MYA-4609 / CBS 101355 / FGSC A1100 / Af293</strain>
    </source>
</reference>
<reference key="2">
    <citation type="journal article" date="2005" name="Nature">
        <title>Genomic sequence of the pathogenic and allergenic filamentous fungus Aspergillus fumigatus.</title>
        <authorList>
            <person name="Nierman W.C."/>
            <person name="Pain A."/>
            <person name="Anderson M.J."/>
            <person name="Wortman J.R."/>
            <person name="Kim H.S."/>
            <person name="Arroyo J."/>
            <person name="Berriman M."/>
            <person name="Abe K."/>
            <person name="Archer D.B."/>
            <person name="Bermejo C."/>
            <person name="Bennett J.W."/>
            <person name="Bowyer P."/>
            <person name="Chen D."/>
            <person name="Collins M."/>
            <person name="Coulsen R."/>
            <person name="Davies R."/>
            <person name="Dyer P.S."/>
            <person name="Farman M.L."/>
            <person name="Fedorova N."/>
            <person name="Fedorova N.D."/>
            <person name="Feldblyum T.V."/>
            <person name="Fischer R."/>
            <person name="Fosker N."/>
            <person name="Fraser A."/>
            <person name="Garcia J.L."/>
            <person name="Garcia M.J."/>
            <person name="Goble A."/>
            <person name="Goldman G.H."/>
            <person name="Gomi K."/>
            <person name="Griffith-Jones S."/>
            <person name="Gwilliam R."/>
            <person name="Haas B.J."/>
            <person name="Haas H."/>
            <person name="Harris D.E."/>
            <person name="Horiuchi H."/>
            <person name="Huang J."/>
            <person name="Humphray S."/>
            <person name="Jimenez J."/>
            <person name="Keller N."/>
            <person name="Khouri H."/>
            <person name="Kitamoto K."/>
            <person name="Kobayashi T."/>
            <person name="Konzack S."/>
            <person name="Kulkarni R."/>
            <person name="Kumagai T."/>
            <person name="Lafton A."/>
            <person name="Latge J.-P."/>
            <person name="Li W."/>
            <person name="Lord A."/>
            <person name="Lu C."/>
            <person name="Majoros W.H."/>
            <person name="May G.S."/>
            <person name="Miller B.L."/>
            <person name="Mohamoud Y."/>
            <person name="Molina M."/>
            <person name="Monod M."/>
            <person name="Mouyna I."/>
            <person name="Mulligan S."/>
            <person name="Murphy L.D."/>
            <person name="O'Neil S."/>
            <person name="Paulsen I."/>
            <person name="Penalva M.A."/>
            <person name="Pertea M."/>
            <person name="Price C."/>
            <person name="Pritchard B.L."/>
            <person name="Quail M.A."/>
            <person name="Rabbinowitsch E."/>
            <person name="Rawlins N."/>
            <person name="Rajandream M.A."/>
            <person name="Reichard U."/>
            <person name="Renauld H."/>
            <person name="Robson G.D."/>
            <person name="Rodriguez de Cordoba S."/>
            <person name="Rodriguez-Pena J.M."/>
            <person name="Ronning C.M."/>
            <person name="Rutter S."/>
            <person name="Salzberg S.L."/>
            <person name="Sanchez M."/>
            <person name="Sanchez-Ferrero J.C."/>
            <person name="Saunders D."/>
            <person name="Seeger K."/>
            <person name="Squares R."/>
            <person name="Squares S."/>
            <person name="Takeuchi M."/>
            <person name="Tekaia F."/>
            <person name="Turner G."/>
            <person name="Vazquez de Aldana C.R."/>
            <person name="Weidman J."/>
            <person name="White O."/>
            <person name="Woodward J.R."/>
            <person name="Yu J.-H."/>
            <person name="Fraser C.M."/>
            <person name="Galagan J.E."/>
            <person name="Asai K."/>
            <person name="Machida M."/>
            <person name="Hall N."/>
            <person name="Barrell B.G."/>
            <person name="Denning D.W."/>
        </authorList>
    </citation>
    <scope>NUCLEOTIDE SEQUENCE [LARGE SCALE GENOMIC DNA]</scope>
    <source>
        <strain>ATCC MYA-4609 / CBS 101355 / FGSC A1100 / Af293</strain>
    </source>
</reference>
<protein>
    <recommendedName>
        <fullName>Histone H4</fullName>
    </recommendedName>
</protein>
<accession>Q7LKT3</accession>
<accession>Q4WS72</accession>
<feature type="initiator methionine" description="Removed" evidence="1">
    <location>
        <position position="1"/>
    </location>
</feature>
<feature type="chain" id="PRO_0000158284" description="Histone H4">
    <location>
        <begin position="2"/>
        <end position="103"/>
    </location>
</feature>
<feature type="DNA-binding region">
    <location>
        <begin position="17"/>
        <end position="21"/>
    </location>
</feature>
<feature type="region of interest" description="Disordered" evidence="4">
    <location>
        <begin position="1"/>
        <end position="20"/>
    </location>
</feature>
<feature type="compositionally biased region" description="Gly residues" evidence="4">
    <location>
        <begin position="1"/>
        <end position="14"/>
    </location>
</feature>
<feature type="modified residue" description="N6-acetyl-N6-methyllysine; alternate" evidence="3">
    <location>
        <position position="6"/>
    </location>
</feature>
<feature type="modified residue" description="N6-methyllysine; alternate" evidence="2">
    <location>
        <position position="6"/>
    </location>
</feature>
<feature type="modified residue" description="N6-methyllysine; alternate" evidence="2">
    <location>
        <position position="9"/>
    </location>
</feature>
<feature type="modified residue" description="N6-acetyl-N6-methyllysine; alternate" evidence="3">
    <location>
        <position position="13"/>
    </location>
</feature>
<feature type="modified residue" description="N6-methyllysine; alternate" evidence="2">
    <location>
        <position position="13"/>
    </location>
</feature>
<feature type="modified residue" description="N6-glutaryllysine" evidence="2">
    <location>
        <position position="92"/>
    </location>
</feature>
<name>H4_ASPFU</name>
<keyword id="KW-0007">Acetylation</keyword>
<keyword id="KW-0158">Chromosome</keyword>
<keyword id="KW-0238">DNA-binding</keyword>
<keyword id="KW-0488">Methylation</keyword>
<keyword id="KW-0544">Nucleosome core</keyword>
<keyword id="KW-0539">Nucleus</keyword>
<keyword id="KW-1185">Reference proteome</keyword>
<evidence type="ECO:0000250" key="1"/>
<evidence type="ECO:0000250" key="2">
    <source>
        <dbReference type="UniProtKB" id="P02309"/>
    </source>
</evidence>
<evidence type="ECO:0000250" key="3">
    <source>
        <dbReference type="UniProtKB" id="P62805"/>
    </source>
</evidence>
<evidence type="ECO:0000256" key="4">
    <source>
        <dbReference type="SAM" id="MobiDB-lite"/>
    </source>
</evidence>
<evidence type="ECO:0000305" key="5"/>
<comment type="function">
    <text>Core component of nucleosome. Nucleosomes wrap and compact DNA into chromatin, limiting DNA accessibility to the cellular machineries which require DNA as a template. Histones thereby play a central role in transcription regulation, DNA repair, DNA replication and chromosomal stability. DNA accessibility is regulated via a complex set of post-translational modifications of histones, also called histone code, and nucleosome remodeling.</text>
</comment>
<comment type="subunit">
    <text>The nucleosome is a histone octamer containing two molecules each of H2A, H2B, H3 and H4 assembled in one H3-H4 heterotetramer and two H2A-H2B heterodimers. The octamer wraps approximately 147 bp of DNA.</text>
</comment>
<comment type="subcellular location">
    <subcellularLocation>
        <location evidence="1">Nucleus</location>
    </subcellularLocation>
    <subcellularLocation>
        <location evidence="1">Chromosome</location>
    </subcellularLocation>
</comment>
<comment type="PTM">
    <text evidence="2">Glutarylation at Lys-92 (H4K91glu) destabilizes nucleosomes by promoting dissociation of the H2A-H2B dimers from nucleosomes.</text>
</comment>
<comment type="similarity">
    <text evidence="5">Belongs to the histone H4 family.</text>
</comment>
<proteinExistence type="inferred from homology"/>
<dbReference type="EMBL" id="BX649607">
    <property type="protein sequence ID" value="CAD29611.1"/>
    <property type="molecule type" value="Genomic_DNA"/>
</dbReference>
<dbReference type="EMBL" id="AAHF01000004">
    <property type="protein sequence ID" value="EAL90710.1"/>
    <property type="molecule type" value="Genomic_DNA"/>
</dbReference>
<dbReference type="RefSeq" id="XP_752748.1">
    <property type="nucleotide sequence ID" value="XM_747655.1"/>
</dbReference>
<dbReference type="SMR" id="Q7LKT3"/>
<dbReference type="FunCoup" id="Q7LKT3">
    <property type="interactions" value="1189"/>
</dbReference>
<dbReference type="STRING" id="330879.Q7LKT3"/>
<dbReference type="EnsemblFungi" id="EAL90710">
    <property type="protein sequence ID" value="EAL90710"/>
    <property type="gene ID" value="AFUA_1G13780"/>
</dbReference>
<dbReference type="GeneID" id="3510198"/>
<dbReference type="KEGG" id="afm:AFUA_1G13780"/>
<dbReference type="VEuPathDB" id="FungiDB:Afu1g13780"/>
<dbReference type="eggNOG" id="KOG3467">
    <property type="taxonomic scope" value="Eukaryota"/>
</dbReference>
<dbReference type="HOGENOM" id="CLU_109117_2_3_1"/>
<dbReference type="InParanoid" id="Q7LKT3"/>
<dbReference type="OMA" id="QKEHING"/>
<dbReference type="OrthoDB" id="3919494at2759"/>
<dbReference type="Proteomes" id="UP000002530">
    <property type="component" value="Chromosome 1"/>
</dbReference>
<dbReference type="GO" id="GO:0000786">
    <property type="term" value="C:nucleosome"/>
    <property type="evidence" value="ECO:0007669"/>
    <property type="project" value="UniProtKB-KW"/>
</dbReference>
<dbReference type="GO" id="GO:0005634">
    <property type="term" value="C:nucleus"/>
    <property type="evidence" value="ECO:0007669"/>
    <property type="project" value="UniProtKB-SubCell"/>
</dbReference>
<dbReference type="GO" id="GO:0003677">
    <property type="term" value="F:DNA binding"/>
    <property type="evidence" value="ECO:0000318"/>
    <property type="project" value="GO_Central"/>
</dbReference>
<dbReference type="GO" id="GO:0046982">
    <property type="term" value="F:protein heterodimerization activity"/>
    <property type="evidence" value="ECO:0007669"/>
    <property type="project" value="InterPro"/>
</dbReference>
<dbReference type="GO" id="GO:0030527">
    <property type="term" value="F:structural constituent of chromatin"/>
    <property type="evidence" value="ECO:0007669"/>
    <property type="project" value="InterPro"/>
</dbReference>
<dbReference type="GO" id="GO:0006334">
    <property type="term" value="P:nucleosome assembly"/>
    <property type="evidence" value="ECO:0000318"/>
    <property type="project" value="GO_Central"/>
</dbReference>
<dbReference type="CDD" id="cd22912">
    <property type="entry name" value="HFD_H4"/>
    <property type="match status" value="1"/>
</dbReference>
<dbReference type="FunFam" id="1.10.20.10:FF:000007">
    <property type="entry name" value="Histone H4"/>
    <property type="match status" value="1"/>
</dbReference>
<dbReference type="Gene3D" id="1.10.20.10">
    <property type="entry name" value="Histone, subunit A"/>
    <property type="match status" value="1"/>
</dbReference>
<dbReference type="InterPro" id="IPR035425">
    <property type="entry name" value="CENP-T/H4_C"/>
</dbReference>
<dbReference type="InterPro" id="IPR009072">
    <property type="entry name" value="Histone-fold"/>
</dbReference>
<dbReference type="InterPro" id="IPR001951">
    <property type="entry name" value="Histone_H4"/>
</dbReference>
<dbReference type="InterPro" id="IPR019809">
    <property type="entry name" value="Histone_H4_CS"/>
</dbReference>
<dbReference type="InterPro" id="IPR004823">
    <property type="entry name" value="TAF_TATA-bd_Histone-like_dom"/>
</dbReference>
<dbReference type="PANTHER" id="PTHR10484">
    <property type="entry name" value="HISTONE H4"/>
    <property type="match status" value="1"/>
</dbReference>
<dbReference type="Pfam" id="PF15511">
    <property type="entry name" value="CENP-T_C"/>
    <property type="match status" value="1"/>
</dbReference>
<dbReference type="PRINTS" id="PR00623">
    <property type="entry name" value="HISTONEH4"/>
</dbReference>
<dbReference type="SMART" id="SM00417">
    <property type="entry name" value="H4"/>
    <property type="match status" value="1"/>
</dbReference>
<dbReference type="SMART" id="SM00803">
    <property type="entry name" value="TAF"/>
    <property type="match status" value="1"/>
</dbReference>
<dbReference type="SUPFAM" id="SSF47113">
    <property type="entry name" value="Histone-fold"/>
    <property type="match status" value="1"/>
</dbReference>
<dbReference type="PROSITE" id="PS00047">
    <property type="entry name" value="HISTONE_H4"/>
    <property type="match status" value="1"/>
</dbReference>
<gene>
    <name type="primary">hhfA</name>
    <name type="ORF">AfA35g10.18C</name>
    <name type="ORF">AFUA_1G13780</name>
</gene>
<sequence>MTGRGKGGKGLGKGGAKRHRKILRDNIQGITKPAIRRLARRGGVKRISAMIYEETRGVLKTFLEGVIRDAVTYTEHAKRKTVTSLDVVYALKRQGRTLYGFGG</sequence>